<feature type="signal peptide" evidence="2">
    <location>
        <begin position="1"/>
        <end position="16"/>
    </location>
</feature>
<feature type="chain" id="PRO_0000292603" description="Cytotoxic and regulatory T-cell molecule">
    <location>
        <begin position="17"/>
        <end position="393"/>
    </location>
</feature>
<feature type="topological domain" description="Extracellular" evidence="13">
    <location>
        <begin position="17"/>
        <end position="289"/>
    </location>
</feature>
<feature type="transmembrane region" description="Helical" evidence="2">
    <location>
        <begin position="290"/>
        <end position="310"/>
    </location>
</feature>
<feature type="topological domain" description="Cytoplasmic" evidence="13">
    <location>
        <begin position="311"/>
        <end position="393"/>
    </location>
</feature>
<feature type="domain" description="Ig-like V-type" evidence="2">
    <location>
        <begin position="17"/>
        <end position="111"/>
    </location>
</feature>
<feature type="domain" description="Ig-like C2-type" evidence="2">
    <location>
        <begin position="119"/>
        <end position="208"/>
    </location>
</feature>
<feature type="region of interest" description="Disordered" evidence="4">
    <location>
        <begin position="218"/>
        <end position="280"/>
    </location>
</feature>
<feature type="region of interest" description="Disordered" evidence="4">
    <location>
        <begin position="333"/>
        <end position="356"/>
    </location>
</feature>
<feature type="short sequence motif" description="PDZ-binding" evidence="14">
    <location>
        <begin position="390"/>
        <end position="393"/>
    </location>
</feature>
<feature type="compositionally biased region" description="Acidic residues" evidence="4">
    <location>
        <begin position="218"/>
        <end position="228"/>
    </location>
</feature>
<feature type="compositionally biased region" description="Low complexity" evidence="4">
    <location>
        <begin position="229"/>
        <end position="246"/>
    </location>
</feature>
<feature type="compositionally biased region" description="Polar residues" evidence="4">
    <location>
        <begin position="247"/>
        <end position="256"/>
    </location>
</feature>
<feature type="compositionally biased region" description="Basic and acidic residues" evidence="4">
    <location>
        <begin position="257"/>
        <end position="267"/>
    </location>
</feature>
<feature type="compositionally biased region" description="Polar residues" evidence="4">
    <location>
        <begin position="270"/>
        <end position="280"/>
    </location>
</feature>
<feature type="compositionally biased region" description="Low complexity" evidence="4">
    <location>
        <begin position="342"/>
        <end position="352"/>
    </location>
</feature>
<feature type="glycosylation site" description="N-linked (GlcNAc...) asparagine" evidence="2">
    <location>
        <position position="85"/>
    </location>
</feature>
<feature type="glycosylation site" description="N-linked (GlcNAc...) asparagine" evidence="2">
    <location>
        <position position="176"/>
    </location>
</feature>
<feature type="disulfide bond" evidence="3">
    <location>
        <begin position="36"/>
        <end position="96"/>
    </location>
</feature>
<feature type="disulfide bond" evidence="3">
    <location>
        <begin position="139"/>
        <end position="194"/>
    </location>
</feature>
<feature type="splice variant" id="VSP_052473" description="In isoform 2." evidence="12">
    <location>
        <begin position="1"/>
        <end position="197"/>
    </location>
</feature>
<feature type="splice variant" id="VSP_052474" description="In isoform 2." evidence="12">
    <original>HEGLHGRKLVAPFQFED</original>
    <variation>MWLKLISVVAEFCFSPF</variation>
    <location>
        <begin position="198"/>
        <end position="214"/>
    </location>
</feature>
<feature type="splice variant" id="VSP_059946" description="In isoform 3.">
    <location>
        <position position="275"/>
    </location>
</feature>
<feature type="mutagenesis site" description="In response to TCR stimulation, increases CD4+ T-cell proliferation and impairs IFNG and IL22 production." evidence="8">
    <location>
        <begin position="390"/>
        <end position="393"/>
    </location>
</feature>
<feature type="sequence conflict" description="In Ref. 1; AAC80266 and 4; AAI17717." evidence="13" ref="1 4">
    <original>A</original>
    <variation>V</variation>
    <location>
        <position position="5"/>
    </location>
</feature>
<feature type="sequence conflict" description="In Ref. 1; AAC80266 and 4; AAI17717." evidence="13" ref="1 4">
    <original>N</original>
    <variation>H</variation>
    <location>
        <position position="165"/>
    </location>
</feature>
<feature type="sequence conflict" description="In Ref. 1; AAC80266 and 4; AAI17717." evidence="13" ref="1 4">
    <original>M</original>
    <variation>T</variation>
    <location>
        <position position="180"/>
    </location>
</feature>
<feature type="sequence conflict" description="In Ref. 1; AAC80266 and 4; AAI17717." evidence="13" ref="1 4">
    <location>
        <begin position="222"/>
        <end position="225"/>
    </location>
</feature>
<feature type="sequence conflict" description="In Ref. 2; BAB24204." evidence="13" ref="2">
    <original>S</original>
    <variation>L</variation>
    <location>
        <position position="339"/>
    </location>
</feature>
<feature type="sequence conflict" description="In Ref. 1; AAC80266 and 4; AAI17717." evidence="13" ref="1 4">
    <original>R</original>
    <variation>Q</variation>
    <location>
        <position position="365"/>
    </location>
</feature>
<comment type="function">
    <text evidence="7 8 9 10">Mediates heterophilic cell-cell adhesion which regulates the activation, differentiation and tissue retention of various T-cell subsets (PubMed:15811952, PubMed:18329370, PubMed:19752223, PubMed:24687959). Interaction with CADM1 promotes natural killer (NK) cell cytotoxicity and IFNG/interferon-gamma secretion by CD8+ T-cells in vitro as well as NK cell-mediated rejection of tumors expressing CADM1 in vivo (PubMed:15811952). Regulates CD8+ T-cell proliferation in response to T-cell receptor (TCR) activation (PubMed:18329370). Appears to be dispensable for CD8+ T-cell-mediated cytotoxicity (PubMed:19752223). Interaction with SCRIB promotes the late phase of cellular polarization of a subset of CD4+ T-cells, which in turn regulates TCR-mediated proliferation and IFNG, IL17 and IL22 production (PubMed:18329370). By interacting with CADM1 on CD8+ dendritic cells, regulates the retention of activated CD8+ T-cells within the draining lymph node (PubMed:19752223). Required for the intestinal retention of intraepithelial CD4+ CD8+ T-cells and, to a lesser extent, intraepithelial and lamina propria CD8+ T-cells and CD4+ T-cells (PubMed:24687959). Interaction with CADM1 promotes the adhesion to gut-associated CD103+ dendritic cells, which may facilitate the expression of gut-homing and adhesion molecules on T-cells and the conversion of CD4+ T-cells into CD4+ CD8+ T-cells (PubMed:24687959).</text>
</comment>
<comment type="subunit">
    <text evidence="1 6 7 8">Monomer (By similarity). May form homodimer (via Ig-like V-type domain) (By similarity). Interacts (via Ig-like V-type domain) with CADM1 (via Ig-like V-type domain); the interaction competes with CRTAM homodimerization and CADM1 homodimerization (PubMed:15781451, PubMed:15811952). Interacts (via PDZ-binding motif) with SCRIB (via PDZ domain 3); the interaction promotes CRTAM and SCRIB polarization in a subset of CD4+ T-cells (PubMed:18329370).</text>
</comment>
<comment type="interaction">
    <interactant intactId="EBI-1766072">
        <id>Q149L7</id>
    </interactant>
    <interactant intactId="EBI-1766028">
        <id>Q80U72</id>
        <label>Scrib</label>
    </interactant>
    <organismsDiffer>false</organismsDiffer>
    <experiments>4</experiments>
</comment>
<comment type="subcellular location">
    <subcellularLocation>
        <location evidence="8 9 10">Cell membrane</location>
        <topology evidence="2">Single-pass type I membrane protein</topology>
    </subcellularLocation>
    <text evidence="8">In a subset of CD4+ T-cells, colocalizes with SCRIB at the immunological synapse during the late phase of T-cell activation.</text>
</comment>
<comment type="alternative products">
    <event type="alternative splicing"/>
    <isoform>
        <id>Q149L7-1</id>
        <name>1</name>
        <sequence type="displayed"/>
    </isoform>
    <isoform>
        <id>Q149L7-2</id>
        <name evidence="12">2</name>
        <sequence type="described" ref="VSP_052473 VSP_052474"/>
    </isoform>
    <isoform>
        <id>Q149L7-3</id>
        <name evidence="11">3</name>
        <sequence type="described" ref="VSP_059946"/>
    </isoform>
</comment>
<comment type="tissue specificity">
    <text evidence="5 7 8 9 10">In the immune system, expression is restricted to activated class-I MHC-restricted cells, including NKT, NK and CD8+ T-cells (at protein level) (PubMed:10811014, PubMed:15811952, PubMed:18329370, PubMed:19752223). Transiently expressed in activated CD8+ T-cells and a subset of activated CD4+ T-cells (at protein level) (PubMed:18329370). Expressed in activated intestinal T-cells, specifically intraepithelial CD4+ CD8+ T-cells, intraepithelial CD4+ T-cells and, CD8+ T-cells in the intestine epithelium, lamina propria, Peyer's Patches and mesenteric lymph nodes (PubMed:24687959). Also expressed in spleen, brain and testis (PubMed:10811014).</text>
</comment>
<comment type="domain">
    <text evidence="8">The extracellular domain is required for the regulation of IFNG and IL22 production, but is dispensable for late T-cell polarization.</text>
</comment>
<comment type="disruption phenotype">
    <text evidence="8 9 10">No visible phenotype (PubMed:18329370, PubMed:19752223). In the small intestine mucosa and under steady-state conditions, severe reduction in the number of intraepithelial CD4+ CD8+ T-cells and, partial reduction in the number of lamina propria and intraepithelial CD8+ and CD4+ T-cells (PubMed:24687959). In intestinal CD4+ T-cells, expression of gut-retention molecules Itgae/CD103 and Cd69, and gut-homing molecule Ccr9 is reduced (PubMed:24687959). Development of lymphocytes and myeloid cells is normal (PubMed:18329370, PubMed:19752223). However, in older mice, the number of CD4+ and CD8+ T-cells is increased in lymph nodes and blood (PubMed:18329370). Susceptible to oral infection with bacterium C.rodentium resulting in higher bacteria load in the colon and spleen (PubMed:18329370). However, in another study, the mice were not susceptible to oral infection with bacterium C.rodentium (PubMed:24687959). Impaired immune response following intranasal infection with influenza virus caused by a decrease in the number of antigen-specific CD8+ T-cells in the infected lung (PubMed:19752223). However, the capacity of CD8+ T-cells to kill infected cells is not affected (PubMed:19752223). Increased resistance to oral infection with intracellular parasite T.gondii caused by a reduced number of IL17-producing CD4+ T-cells resulting in enhanced clearance of the parasite (PubMed:24687959).</text>
</comment>
<comment type="similarity">
    <text evidence="1">Belongs to the nectin family.</text>
</comment>
<comment type="sequence caution" evidence="13">
    <conflict type="erroneous initiation">
        <sequence resource="EMBL-CDS" id="BAB24204"/>
    </conflict>
    <text>Truncated N-terminus.</text>
</comment>
<comment type="sequence caution" evidence="13">
    <conflict type="frameshift">
        <sequence resource="EMBL-CDS" id="BAB24204"/>
    </conflict>
</comment>
<protein>
    <recommendedName>
        <fullName>Cytotoxic and regulatory T-cell molecule</fullName>
    </recommendedName>
    <alternativeName>
        <fullName>Class-I MHC-restricted T-cell-associated molecule</fullName>
    </alternativeName>
    <cdAntigenName>CD355</cdAntigenName>
</protein>
<accession>Q149L7</accession>
<accession>A0A087WPL6</accession>
<accession>M0QWH9</accession>
<accession>Q3TQA9</accession>
<accession>Q9CVZ9</accession>
<accession>Q9Z151</accession>
<organism>
    <name type="scientific">Mus musculus</name>
    <name type="common">Mouse</name>
    <dbReference type="NCBI Taxonomy" id="10090"/>
    <lineage>
        <taxon>Eukaryota</taxon>
        <taxon>Metazoa</taxon>
        <taxon>Chordata</taxon>
        <taxon>Craniata</taxon>
        <taxon>Vertebrata</taxon>
        <taxon>Euteleostomi</taxon>
        <taxon>Mammalia</taxon>
        <taxon>Eutheria</taxon>
        <taxon>Euarchontoglires</taxon>
        <taxon>Glires</taxon>
        <taxon>Rodentia</taxon>
        <taxon>Myomorpha</taxon>
        <taxon>Muroidea</taxon>
        <taxon>Muridae</taxon>
        <taxon>Murinae</taxon>
        <taxon>Mus</taxon>
        <taxon>Mus</taxon>
    </lineage>
</organism>
<gene>
    <name evidence="17" type="primary">Crtam</name>
</gene>
<keyword id="KW-1064">Adaptive immunity</keyword>
<keyword id="KW-0025">Alternative splicing</keyword>
<keyword id="KW-0130">Cell adhesion</keyword>
<keyword id="KW-1003">Cell membrane</keyword>
<keyword id="KW-1015">Disulfide bond</keyword>
<keyword id="KW-0325">Glycoprotein</keyword>
<keyword id="KW-0391">Immunity</keyword>
<keyword id="KW-0393">Immunoglobulin domain</keyword>
<keyword id="KW-0472">Membrane</keyword>
<keyword id="KW-1185">Reference proteome</keyword>
<keyword id="KW-0677">Repeat</keyword>
<keyword id="KW-0732">Signal</keyword>
<keyword id="KW-0812">Transmembrane</keyword>
<keyword id="KW-1133">Transmembrane helix</keyword>
<proteinExistence type="evidence at protein level"/>
<sequence length="393" mass="43907">MWWGALSLLFWVPVQAAFLKMETVTVEEGQTLTLTCVTSQTKNVSLQWLAPSGFTIFLNQHPALKSSKYQLLHHSATQLSISVSNVTLREEGVYTCLHYGSSVKTKQVRVTVLVTPFQPTVEALVLRRQNGEKSVVLKCSTERSKPPPQITWLLGEGLEIYGELNHEFEADGKICNTSSMLIARAYGKNSTVHCIIQHEGLHGRKLVAPFQFEDLVADQETSDQETSDAPEQSSLSSQALQQPTSTVSMMENSSIPETDKEEKEHATQDPGLSTEASAQHTGLARRKSGILLLTLVSFLIFILFIIVQLFIMKLRKAHVVWKKESEISEQALESYRSRSNNEETSSQENSSQAPQSKRCMNYITRLYSGAKTKKSAQHWKLGGKHSRVPESIV</sequence>
<reference key="1">
    <citation type="journal article" date="2000" name="J. Leukoc. Biol.">
        <title>A molecular analysis of NKT cells: identification of a class-I restricted T cell-associated molecule (CRTAM).</title>
        <authorList>
            <person name="Kennedy J."/>
            <person name="Vicari A.P."/>
            <person name="Saylor V."/>
            <person name="Zurawski S.M."/>
            <person name="Copeland N.G."/>
            <person name="Gilbert D.J."/>
            <person name="Jenkins N.A."/>
            <person name="Zlotnik A."/>
        </authorList>
    </citation>
    <scope>NUCLEOTIDE SEQUENCE [MRNA] (ISOFORM 3)</scope>
    <scope>TISSUE SPECIFICITY</scope>
    <source>
        <strain>BALB/cJ</strain>
        <tissue>Thymocyte</tissue>
    </source>
</reference>
<reference key="2">
    <citation type="journal article" date="2005" name="Science">
        <title>The transcriptional landscape of the mammalian genome.</title>
        <authorList>
            <person name="Carninci P."/>
            <person name="Kasukawa T."/>
            <person name="Katayama S."/>
            <person name="Gough J."/>
            <person name="Frith M.C."/>
            <person name="Maeda N."/>
            <person name="Oyama R."/>
            <person name="Ravasi T."/>
            <person name="Lenhard B."/>
            <person name="Wells C."/>
            <person name="Kodzius R."/>
            <person name="Shimokawa K."/>
            <person name="Bajic V.B."/>
            <person name="Brenner S.E."/>
            <person name="Batalov S."/>
            <person name="Forrest A.R."/>
            <person name="Zavolan M."/>
            <person name="Davis M.J."/>
            <person name="Wilming L.G."/>
            <person name="Aidinis V."/>
            <person name="Allen J.E."/>
            <person name="Ambesi-Impiombato A."/>
            <person name="Apweiler R."/>
            <person name="Aturaliya R.N."/>
            <person name="Bailey T.L."/>
            <person name="Bansal M."/>
            <person name="Baxter L."/>
            <person name="Beisel K.W."/>
            <person name="Bersano T."/>
            <person name="Bono H."/>
            <person name="Chalk A.M."/>
            <person name="Chiu K.P."/>
            <person name="Choudhary V."/>
            <person name="Christoffels A."/>
            <person name="Clutterbuck D.R."/>
            <person name="Crowe M.L."/>
            <person name="Dalla E."/>
            <person name="Dalrymple B.P."/>
            <person name="de Bono B."/>
            <person name="Della Gatta G."/>
            <person name="di Bernardo D."/>
            <person name="Down T."/>
            <person name="Engstrom P."/>
            <person name="Fagiolini M."/>
            <person name="Faulkner G."/>
            <person name="Fletcher C.F."/>
            <person name="Fukushima T."/>
            <person name="Furuno M."/>
            <person name="Futaki S."/>
            <person name="Gariboldi M."/>
            <person name="Georgii-Hemming P."/>
            <person name="Gingeras T.R."/>
            <person name="Gojobori T."/>
            <person name="Green R.E."/>
            <person name="Gustincich S."/>
            <person name="Harbers M."/>
            <person name="Hayashi Y."/>
            <person name="Hensch T.K."/>
            <person name="Hirokawa N."/>
            <person name="Hill D."/>
            <person name="Huminiecki L."/>
            <person name="Iacono M."/>
            <person name="Ikeo K."/>
            <person name="Iwama A."/>
            <person name="Ishikawa T."/>
            <person name="Jakt M."/>
            <person name="Kanapin A."/>
            <person name="Katoh M."/>
            <person name="Kawasawa Y."/>
            <person name="Kelso J."/>
            <person name="Kitamura H."/>
            <person name="Kitano H."/>
            <person name="Kollias G."/>
            <person name="Krishnan S.P."/>
            <person name="Kruger A."/>
            <person name="Kummerfeld S.K."/>
            <person name="Kurochkin I.V."/>
            <person name="Lareau L.F."/>
            <person name="Lazarevic D."/>
            <person name="Lipovich L."/>
            <person name="Liu J."/>
            <person name="Liuni S."/>
            <person name="McWilliam S."/>
            <person name="Madan Babu M."/>
            <person name="Madera M."/>
            <person name="Marchionni L."/>
            <person name="Matsuda H."/>
            <person name="Matsuzawa S."/>
            <person name="Miki H."/>
            <person name="Mignone F."/>
            <person name="Miyake S."/>
            <person name="Morris K."/>
            <person name="Mottagui-Tabar S."/>
            <person name="Mulder N."/>
            <person name="Nakano N."/>
            <person name="Nakauchi H."/>
            <person name="Ng P."/>
            <person name="Nilsson R."/>
            <person name="Nishiguchi S."/>
            <person name="Nishikawa S."/>
            <person name="Nori F."/>
            <person name="Ohara O."/>
            <person name="Okazaki Y."/>
            <person name="Orlando V."/>
            <person name="Pang K.C."/>
            <person name="Pavan W.J."/>
            <person name="Pavesi G."/>
            <person name="Pesole G."/>
            <person name="Petrovsky N."/>
            <person name="Piazza S."/>
            <person name="Reed J."/>
            <person name="Reid J.F."/>
            <person name="Ring B.Z."/>
            <person name="Ringwald M."/>
            <person name="Rost B."/>
            <person name="Ruan Y."/>
            <person name="Salzberg S.L."/>
            <person name="Sandelin A."/>
            <person name="Schneider C."/>
            <person name="Schoenbach C."/>
            <person name="Sekiguchi K."/>
            <person name="Semple C.A."/>
            <person name="Seno S."/>
            <person name="Sessa L."/>
            <person name="Sheng Y."/>
            <person name="Shibata Y."/>
            <person name="Shimada H."/>
            <person name="Shimada K."/>
            <person name="Silva D."/>
            <person name="Sinclair B."/>
            <person name="Sperling S."/>
            <person name="Stupka E."/>
            <person name="Sugiura K."/>
            <person name="Sultana R."/>
            <person name="Takenaka Y."/>
            <person name="Taki K."/>
            <person name="Tammoja K."/>
            <person name="Tan S.L."/>
            <person name="Tang S."/>
            <person name="Taylor M.S."/>
            <person name="Tegner J."/>
            <person name="Teichmann S.A."/>
            <person name="Ueda H.R."/>
            <person name="van Nimwegen E."/>
            <person name="Verardo R."/>
            <person name="Wei C.L."/>
            <person name="Yagi K."/>
            <person name="Yamanishi H."/>
            <person name="Zabarovsky E."/>
            <person name="Zhu S."/>
            <person name="Zimmer A."/>
            <person name="Hide W."/>
            <person name="Bult C."/>
            <person name="Grimmond S.M."/>
            <person name="Teasdale R.D."/>
            <person name="Liu E.T."/>
            <person name="Brusic V."/>
            <person name="Quackenbush J."/>
            <person name="Wahlestedt C."/>
            <person name="Mattick J.S."/>
            <person name="Hume D.A."/>
            <person name="Kai C."/>
            <person name="Sasaki D."/>
            <person name="Tomaru Y."/>
            <person name="Fukuda S."/>
            <person name="Kanamori-Katayama M."/>
            <person name="Suzuki M."/>
            <person name="Aoki J."/>
            <person name="Arakawa T."/>
            <person name="Iida J."/>
            <person name="Imamura K."/>
            <person name="Itoh M."/>
            <person name="Kato T."/>
            <person name="Kawaji H."/>
            <person name="Kawagashira N."/>
            <person name="Kawashima T."/>
            <person name="Kojima M."/>
            <person name="Kondo S."/>
            <person name="Konno H."/>
            <person name="Nakano K."/>
            <person name="Ninomiya N."/>
            <person name="Nishio T."/>
            <person name="Okada M."/>
            <person name="Plessy C."/>
            <person name="Shibata K."/>
            <person name="Shiraki T."/>
            <person name="Suzuki S."/>
            <person name="Tagami M."/>
            <person name="Waki K."/>
            <person name="Watahiki A."/>
            <person name="Okamura-Oho Y."/>
            <person name="Suzuki H."/>
            <person name="Kawai J."/>
            <person name="Hayashizaki Y."/>
        </authorList>
    </citation>
    <scope>NUCLEOTIDE SEQUENCE [LARGE SCALE MRNA] (ISOFORM 2)</scope>
    <scope>NUCLEOTIDE SEQUENCE [LARGE SCALE MRNA] OF 80-389 (ISOFORM 1)</scope>
    <source>
        <strain evidence="16">C57BL/6J</strain>
        <tissue evidence="16">Cerebellum</tissue>
        <tissue evidence="15">Testis</tissue>
    </source>
</reference>
<reference key="3">
    <citation type="journal article" date="2009" name="PLoS Biol.">
        <title>Lineage-specific biology revealed by a finished genome assembly of the mouse.</title>
        <authorList>
            <person name="Church D.M."/>
            <person name="Goodstadt L."/>
            <person name="Hillier L.W."/>
            <person name="Zody M.C."/>
            <person name="Goldstein S."/>
            <person name="She X."/>
            <person name="Bult C.J."/>
            <person name="Agarwala R."/>
            <person name="Cherry J.L."/>
            <person name="DiCuccio M."/>
            <person name="Hlavina W."/>
            <person name="Kapustin Y."/>
            <person name="Meric P."/>
            <person name="Maglott D."/>
            <person name="Birtle Z."/>
            <person name="Marques A.C."/>
            <person name="Graves T."/>
            <person name="Zhou S."/>
            <person name="Teague B."/>
            <person name="Potamousis K."/>
            <person name="Churas C."/>
            <person name="Place M."/>
            <person name="Herschleb J."/>
            <person name="Runnheim R."/>
            <person name="Forrest D."/>
            <person name="Amos-Landgraf J."/>
            <person name="Schwartz D.C."/>
            <person name="Cheng Z."/>
            <person name="Lindblad-Toh K."/>
            <person name="Eichler E.E."/>
            <person name="Ponting C.P."/>
        </authorList>
    </citation>
    <scope>NUCLEOTIDE SEQUENCE [LARGE SCALE GENOMIC DNA]</scope>
    <source>
        <strain>C57BL/6J</strain>
    </source>
</reference>
<reference key="4">
    <citation type="journal article" date="2004" name="Genome Res.">
        <title>The status, quality, and expansion of the NIH full-length cDNA project: the Mammalian Gene Collection (MGC).</title>
        <authorList>
            <consortium name="The MGC Project Team"/>
        </authorList>
    </citation>
    <scope>NUCLEOTIDE SEQUENCE [LARGE SCALE MRNA] (ISOFORM 1)</scope>
</reference>
<reference key="5">
    <citation type="journal article" date="2005" name="Blood">
        <title>The tumor suppressor TSLC1/NECL-2 triggers NK-cell and CD8+ T-cell responses through the cell-surface receptor CRTAM.</title>
        <authorList>
            <person name="Boles K.S."/>
            <person name="Barchet W."/>
            <person name="Diacovo T."/>
            <person name="Cella M."/>
            <person name="Colonna M."/>
        </authorList>
    </citation>
    <scope>FUNCTION</scope>
    <scope>INTERACTION WITH CADM1</scope>
    <scope>TISSUE SPECIFICITY</scope>
</reference>
<reference key="6">
    <citation type="journal article" date="2005" name="J. Biol. Chem.">
        <title>Nectin-like protein 2 defines a subset of T-cell zone dendritic cells and is a ligand for class-I-restricted T-cell-associated molecule.</title>
        <authorList>
            <person name="Galibert L."/>
            <person name="Diemer G.S."/>
            <person name="Liu Z."/>
            <person name="Johnson R.S."/>
            <person name="Smith J.L."/>
            <person name="Walzer T."/>
            <person name="Comeau M.R."/>
            <person name="Rauch C.T."/>
            <person name="Wolfson M.F."/>
            <person name="Sorensen R.A."/>
            <person name="Van der Vuurst de Vries A.-R."/>
            <person name="Branstetter D.G."/>
            <person name="Koelling R.M."/>
            <person name="Scholler J."/>
            <person name="Fanslow W.C."/>
            <person name="Baum P.R."/>
            <person name="Derry J.M."/>
            <person name="Yan W."/>
        </authorList>
    </citation>
    <scope>INTERACTION WITH CADM1</scope>
</reference>
<reference key="7">
    <citation type="journal article" date="2008" name="Cell">
        <title>Regulation of a late phase of T cell polarity and effector functions by Crtam.</title>
        <authorList>
            <person name="Yeh J.H."/>
            <person name="Sidhu S.S."/>
            <person name="Chan A.C."/>
        </authorList>
    </citation>
    <scope>FUNCTION</scope>
    <scope>INTERACTION WITH SCRIB</scope>
    <scope>SUBCELLULAR LOCATION</scope>
    <scope>TISSUE SPECIFICITY</scope>
    <scope>DOMAIN</scope>
    <scope>MOTIF</scope>
    <scope>DISRUPTION PHENOTYPE</scope>
    <scope>MUTAGENESIS OF 390-GLU--VAL-393</scope>
</reference>
<reference key="8">
    <citation type="journal article" date="2009" name="J. Immunol.">
        <title>CRTAM confers late-stage activation of CD8+ T cells to regulate retention within lymph node.</title>
        <authorList>
            <person name="Takeuchi A."/>
            <person name="Itoh Y."/>
            <person name="Takumi A."/>
            <person name="Ishihara C."/>
            <person name="Arase N."/>
            <person name="Yokosuka T."/>
            <person name="Koseki H."/>
            <person name="Yamasaki S."/>
            <person name="Takai Y."/>
            <person name="Miyoshi J."/>
            <person name="Ogasawara K."/>
            <person name="Saito T."/>
        </authorList>
    </citation>
    <scope>FUNCTION</scope>
    <scope>SUBCELLULAR LOCATION</scope>
    <scope>TISSUE SPECIFICITY</scope>
    <scope>DISRUPTION PHENOTYPE</scope>
</reference>
<reference key="9">
    <citation type="journal article" date="2014" name="J. Exp. Med.">
        <title>CRTAM controls residency of gut CD4+CD8+ T cells in the steady state and maintenance of gut CD4+ Th17 during parasitic infection.</title>
        <authorList>
            <person name="Cortez V.S."/>
            <person name="Cervantes-Barragan L."/>
            <person name="Song C."/>
            <person name="Gilfillan S."/>
            <person name="McDonald K.G."/>
            <person name="Tussiwand R."/>
            <person name="Edelson B.T."/>
            <person name="Murakami Y."/>
            <person name="Murphy K.M."/>
            <person name="Newberry R.D."/>
            <person name="Sibley L.D."/>
            <person name="Colonna M."/>
        </authorList>
    </citation>
    <scope>FUNCTION</scope>
    <scope>SUBCELLULAR LOCATION</scope>
    <scope>TISSUE SPECIFICITY</scope>
    <scope>DISRUPTION PHENOTYPE</scope>
</reference>
<name>CRTAM_MOUSE</name>
<dbReference type="EMBL" id="AF001104">
    <property type="protein sequence ID" value="AAC80266.1"/>
    <property type="molecule type" value="mRNA"/>
</dbReference>
<dbReference type="EMBL" id="AK005719">
    <property type="protein sequence ID" value="BAB24204.2"/>
    <property type="status" value="ALT_SEQ"/>
    <property type="molecule type" value="mRNA"/>
</dbReference>
<dbReference type="EMBL" id="AK163744">
    <property type="protein sequence ID" value="BAE37475.1"/>
    <property type="molecule type" value="mRNA"/>
</dbReference>
<dbReference type="EMBL" id="AC159820">
    <property type="status" value="NOT_ANNOTATED_CDS"/>
    <property type="molecule type" value="Genomic_DNA"/>
</dbReference>
<dbReference type="EMBL" id="BC117716">
    <property type="protein sequence ID" value="AAI17717.1"/>
    <property type="molecule type" value="mRNA"/>
</dbReference>
<dbReference type="CCDS" id="CCDS40593.2">
    <molecule id="Q149L7-3"/>
</dbReference>
<dbReference type="CCDS" id="CCDS72216.1">
    <molecule id="Q149L7-1"/>
</dbReference>
<dbReference type="RefSeq" id="NP_001268883.1">
    <molecule id="Q149L7-1"/>
    <property type="nucleotide sequence ID" value="NM_001281954.2"/>
</dbReference>
<dbReference type="RefSeq" id="NP_062338.3">
    <molecule id="Q149L7-3"/>
    <property type="nucleotide sequence ID" value="NM_019465.5"/>
</dbReference>
<dbReference type="SMR" id="Q149L7"/>
<dbReference type="FunCoup" id="Q149L7">
    <property type="interactions" value="1122"/>
</dbReference>
<dbReference type="IntAct" id="Q149L7">
    <property type="interactions" value="1"/>
</dbReference>
<dbReference type="STRING" id="10090.ENSMUSP00000137837"/>
<dbReference type="GlyCosmos" id="Q149L7">
    <property type="glycosylation" value="2 sites, No reported glycans"/>
</dbReference>
<dbReference type="GlyGen" id="Q149L7">
    <property type="glycosylation" value="2 sites"/>
</dbReference>
<dbReference type="PhosphoSitePlus" id="Q149L7"/>
<dbReference type="PaxDb" id="10090-ENSMUSP00000137837"/>
<dbReference type="ProteomicsDB" id="284024">
    <molecule id="Q149L7-1"/>
</dbReference>
<dbReference type="ProteomicsDB" id="316411"/>
<dbReference type="ProteomicsDB" id="318036"/>
<dbReference type="Antibodypedia" id="32807">
    <property type="antibodies" value="268 antibodies from 26 providers"/>
</dbReference>
<dbReference type="DNASU" id="54698"/>
<dbReference type="Ensembl" id="ENSMUST00000180384.3">
    <molecule id="Q149L7-1"/>
    <property type="protein sequence ID" value="ENSMUSP00000137837.2"/>
    <property type="gene ID" value="ENSMUSG00000032021.15"/>
</dbReference>
<dbReference type="Ensembl" id="ENSMUST00000180872.9">
    <molecule id="Q149L7-2"/>
    <property type="protein sequence ID" value="ENSMUSP00000137749.2"/>
    <property type="gene ID" value="ENSMUSG00000032021.15"/>
</dbReference>
<dbReference type="Ensembl" id="ENSMUST00000188848.8">
    <molecule id="Q149L7-3"/>
    <property type="protein sequence ID" value="ENSMUSP00000139826.2"/>
    <property type="gene ID" value="ENSMUSG00000032021.15"/>
</dbReference>
<dbReference type="GeneID" id="54698"/>
<dbReference type="KEGG" id="mmu:54698"/>
<dbReference type="UCSC" id="uc009pad.1">
    <molecule id="Q149L7-2"/>
    <property type="organism name" value="mouse"/>
</dbReference>
<dbReference type="AGR" id="MGI:1859822"/>
<dbReference type="CTD" id="56253"/>
<dbReference type="MGI" id="MGI:1859822">
    <property type="gene designation" value="Crtam"/>
</dbReference>
<dbReference type="VEuPathDB" id="HostDB:ENSMUSG00000032021"/>
<dbReference type="eggNOG" id="ENOG502RYH2">
    <property type="taxonomic scope" value="Eukaryota"/>
</dbReference>
<dbReference type="GeneTree" id="ENSGT00940000159804"/>
<dbReference type="InParanoid" id="Q149L7"/>
<dbReference type="OMA" id="GVYKCFY"/>
<dbReference type="OrthoDB" id="10006996at2759"/>
<dbReference type="PhylomeDB" id="Q149L7"/>
<dbReference type="Reactome" id="R-MMU-198933">
    <property type="pathway name" value="Immunoregulatory interactions between a Lymphoid and a non-Lymphoid cell"/>
</dbReference>
<dbReference type="BioGRID-ORCS" id="54698">
    <property type="hits" value="4 hits in 73 CRISPR screens"/>
</dbReference>
<dbReference type="PRO" id="PR:Q149L7"/>
<dbReference type="Proteomes" id="UP000000589">
    <property type="component" value="Chromosome 9"/>
</dbReference>
<dbReference type="RNAct" id="Q149L7">
    <property type="molecule type" value="protein"/>
</dbReference>
<dbReference type="Bgee" id="ENSMUSG00000032021">
    <property type="expression patterns" value="Expressed in cerebellar cortex and 44 other cell types or tissues"/>
</dbReference>
<dbReference type="ExpressionAtlas" id="Q149L7">
    <property type="expression patterns" value="baseline and differential"/>
</dbReference>
<dbReference type="GO" id="GO:0001772">
    <property type="term" value="C:immunological synapse"/>
    <property type="evidence" value="ECO:0000314"/>
    <property type="project" value="UniProtKB"/>
</dbReference>
<dbReference type="GO" id="GO:0005886">
    <property type="term" value="C:plasma membrane"/>
    <property type="evidence" value="ECO:0000314"/>
    <property type="project" value="UniProtKB"/>
</dbReference>
<dbReference type="GO" id="GO:0005102">
    <property type="term" value="F:signaling receptor binding"/>
    <property type="evidence" value="ECO:0000353"/>
    <property type="project" value="UniProtKB"/>
</dbReference>
<dbReference type="GO" id="GO:0002250">
    <property type="term" value="P:adaptive immune response"/>
    <property type="evidence" value="ECO:0007669"/>
    <property type="project" value="UniProtKB-KW"/>
</dbReference>
<dbReference type="GO" id="GO:0008037">
    <property type="term" value="P:cell recognition"/>
    <property type="evidence" value="ECO:0000314"/>
    <property type="project" value="UniProtKB"/>
</dbReference>
<dbReference type="GO" id="GO:0051606">
    <property type="term" value="P:detection of stimulus"/>
    <property type="evidence" value="ECO:0000314"/>
    <property type="project" value="UniProtKB"/>
</dbReference>
<dbReference type="GO" id="GO:0002355">
    <property type="term" value="P:detection of tumor cell"/>
    <property type="evidence" value="ECO:0000314"/>
    <property type="project" value="UniProtKB"/>
</dbReference>
<dbReference type="GO" id="GO:0001768">
    <property type="term" value="P:establishment of T cell polarity"/>
    <property type="evidence" value="ECO:0000314"/>
    <property type="project" value="UniProtKB"/>
</dbReference>
<dbReference type="GO" id="GO:0007157">
    <property type="term" value="P:heterophilic cell-cell adhesion via plasma membrane cell adhesion molecules"/>
    <property type="evidence" value="ECO:0000315"/>
    <property type="project" value="UniProtKB"/>
</dbReference>
<dbReference type="GO" id="GO:0097021">
    <property type="term" value="P:lymphocyte migration into lymphoid organs"/>
    <property type="evidence" value="ECO:0000315"/>
    <property type="project" value="UniProtKB"/>
</dbReference>
<dbReference type="GO" id="GO:0046007">
    <property type="term" value="P:negative regulation of activated T cell proliferation"/>
    <property type="evidence" value="ECO:0000315"/>
    <property type="project" value="UniProtKB"/>
</dbReference>
<dbReference type="GO" id="GO:0001819">
    <property type="term" value="P:positive regulation of cytokine production"/>
    <property type="evidence" value="ECO:0000250"/>
    <property type="project" value="UniProtKB"/>
</dbReference>
<dbReference type="GO" id="GO:0045954">
    <property type="term" value="P:positive regulation of natural killer cell mediated cytotoxicity"/>
    <property type="evidence" value="ECO:0000314"/>
    <property type="project" value="UniProtKB"/>
</dbReference>
<dbReference type="GO" id="GO:0002860">
    <property type="term" value="P:positive regulation of natural killer cell mediated cytotoxicity directed against tumor cell target"/>
    <property type="evidence" value="ECO:0000314"/>
    <property type="project" value="UniProtKB"/>
</dbReference>
<dbReference type="GO" id="GO:0032729">
    <property type="term" value="P:positive regulation of type II interferon production"/>
    <property type="evidence" value="ECO:0000315"/>
    <property type="project" value="UniProtKB"/>
</dbReference>
<dbReference type="GO" id="GO:2001185">
    <property type="term" value="P:regulation of CD8-positive, alpha-beta T cell activation"/>
    <property type="evidence" value="ECO:0000315"/>
    <property type="project" value="UniProtKB"/>
</dbReference>
<dbReference type="GO" id="GO:0050863">
    <property type="term" value="P:regulation of T cell activation"/>
    <property type="evidence" value="ECO:0000315"/>
    <property type="project" value="UniProtKB"/>
</dbReference>
<dbReference type="GO" id="GO:0045580">
    <property type="term" value="P:regulation of T cell differentiation"/>
    <property type="evidence" value="ECO:0000315"/>
    <property type="project" value="UniProtKB"/>
</dbReference>
<dbReference type="FunFam" id="2.60.40.10:FF:000013">
    <property type="entry name" value="cell adhesion molecule 1 isoform X1"/>
    <property type="match status" value="1"/>
</dbReference>
<dbReference type="FunFam" id="2.60.40.10:FF:002862">
    <property type="entry name" value="Cytotoxic and regulatory T-cell molecule"/>
    <property type="match status" value="1"/>
</dbReference>
<dbReference type="Gene3D" id="2.60.40.10">
    <property type="entry name" value="Immunoglobulins"/>
    <property type="match status" value="2"/>
</dbReference>
<dbReference type="InterPro" id="IPR013162">
    <property type="entry name" value="CD80_C2-set"/>
</dbReference>
<dbReference type="InterPro" id="IPR053096">
    <property type="entry name" value="CRTAM"/>
</dbReference>
<dbReference type="InterPro" id="IPR007110">
    <property type="entry name" value="Ig-like_dom"/>
</dbReference>
<dbReference type="InterPro" id="IPR036179">
    <property type="entry name" value="Ig-like_dom_sf"/>
</dbReference>
<dbReference type="InterPro" id="IPR013783">
    <property type="entry name" value="Ig-like_fold"/>
</dbReference>
<dbReference type="InterPro" id="IPR003599">
    <property type="entry name" value="Ig_sub"/>
</dbReference>
<dbReference type="InterPro" id="IPR013106">
    <property type="entry name" value="Ig_V-set"/>
</dbReference>
<dbReference type="PANTHER" id="PTHR47118">
    <property type="entry name" value="CYTOTOXIC AND REGULATORY T-CELL MOLECULE"/>
    <property type="match status" value="1"/>
</dbReference>
<dbReference type="PANTHER" id="PTHR47118:SF1">
    <property type="entry name" value="CYTOTOXIC AND REGULATORY T-CELL MOLECULE"/>
    <property type="match status" value="1"/>
</dbReference>
<dbReference type="Pfam" id="PF08205">
    <property type="entry name" value="C2-set_2"/>
    <property type="match status" value="1"/>
</dbReference>
<dbReference type="Pfam" id="PF07686">
    <property type="entry name" value="V-set"/>
    <property type="match status" value="1"/>
</dbReference>
<dbReference type="SMART" id="SM00409">
    <property type="entry name" value="IG"/>
    <property type="match status" value="1"/>
</dbReference>
<dbReference type="SUPFAM" id="SSF48726">
    <property type="entry name" value="Immunoglobulin"/>
    <property type="match status" value="2"/>
</dbReference>
<dbReference type="PROSITE" id="PS50835">
    <property type="entry name" value="IG_LIKE"/>
    <property type="match status" value="2"/>
</dbReference>
<evidence type="ECO:0000250" key="1">
    <source>
        <dbReference type="UniProtKB" id="O95727"/>
    </source>
</evidence>
<evidence type="ECO:0000255" key="2"/>
<evidence type="ECO:0000255" key="3">
    <source>
        <dbReference type="PROSITE-ProRule" id="PRU00114"/>
    </source>
</evidence>
<evidence type="ECO:0000256" key="4">
    <source>
        <dbReference type="SAM" id="MobiDB-lite"/>
    </source>
</evidence>
<evidence type="ECO:0000269" key="5">
    <source>
    </source>
</evidence>
<evidence type="ECO:0000269" key="6">
    <source>
    </source>
</evidence>
<evidence type="ECO:0000269" key="7">
    <source>
    </source>
</evidence>
<evidence type="ECO:0000269" key="8">
    <source>
    </source>
</evidence>
<evidence type="ECO:0000269" key="9">
    <source>
    </source>
</evidence>
<evidence type="ECO:0000269" key="10">
    <source>
    </source>
</evidence>
<evidence type="ECO:0000303" key="11">
    <source>
    </source>
</evidence>
<evidence type="ECO:0000303" key="12">
    <source>
    </source>
</evidence>
<evidence type="ECO:0000305" key="13"/>
<evidence type="ECO:0000305" key="14">
    <source>
    </source>
</evidence>
<evidence type="ECO:0000312" key="15">
    <source>
        <dbReference type="EMBL" id="BAB24204.2"/>
    </source>
</evidence>
<evidence type="ECO:0000312" key="16">
    <source>
        <dbReference type="EMBL" id="BAE37475.1"/>
    </source>
</evidence>
<evidence type="ECO:0000312" key="17">
    <source>
        <dbReference type="MGI" id="MGI:1859822"/>
    </source>
</evidence>